<dbReference type="EMBL" id="AL627362">
    <property type="protein sequence ID" value="CAD60618.1"/>
    <property type="molecule type" value="Genomic_DNA"/>
</dbReference>
<dbReference type="EMBL" id="CU633871">
    <property type="protein sequence ID" value="CAP65298.1"/>
    <property type="molecule type" value="Genomic_DNA"/>
</dbReference>
<dbReference type="EMBL" id="FO904940">
    <property type="protein sequence ID" value="CDP29509.1"/>
    <property type="molecule type" value="Genomic_DNA"/>
</dbReference>
<dbReference type="RefSeq" id="XP_001905388.1">
    <property type="nucleotide sequence ID" value="XM_001905353.1"/>
</dbReference>
<dbReference type="FunCoup" id="Q875C2">
    <property type="interactions" value="67"/>
</dbReference>
<dbReference type="STRING" id="515849.Q875C2"/>
<dbReference type="GeneID" id="6189523"/>
<dbReference type="KEGG" id="pan:PODANSg2413"/>
<dbReference type="VEuPathDB" id="FungiDB:PODANS_5_5310"/>
<dbReference type="eggNOG" id="KOG4431">
    <property type="taxonomic scope" value="Eukaryota"/>
</dbReference>
<dbReference type="HOGENOM" id="CLU_087356_0_1_1"/>
<dbReference type="InParanoid" id="Q875C2"/>
<dbReference type="OrthoDB" id="6604018at2759"/>
<dbReference type="Proteomes" id="UP000001197">
    <property type="component" value="Chromosome 5"/>
</dbReference>
<dbReference type="GO" id="GO:0031966">
    <property type="term" value="C:mitochondrial membrane"/>
    <property type="evidence" value="ECO:0007669"/>
    <property type="project" value="UniProtKB-SubCell"/>
</dbReference>
<dbReference type="GO" id="GO:0097250">
    <property type="term" value="P:mitochondrial respirasome assembly"/>
    <property type="evidence" value="ECO:0007669"/>
    <property type="project" value="TreeGrafter"/>
</dbReference>
<dbReference type="Gene3D" id="6.10.140.1320">
    <property type="match status" value="1"/>
</dbReference>
<dbReference type="InterPro" id="IPR007667">
    <property type="entry name" value="Hypoxia_induced_domain"/>
</dbReference>
<dbReference type="InterPro" id="IPR050355">
    <property type="entry name" value="RCF1"/>
</dbReference>
<dbReference type="PANTHER" id="PTHR12297:SF3">
    <property type="entry name" value="HIG1 DOMAIN FAMILY MEMBER 1A"/>
    <property type="match status" value="1"/>
</dbReference>
<dbReference type="PANTHER" id="PTHR12297">
    <property type="entry name" value="HYPOXIA-INDUCBILE GENE 1 HIG1 -RELATED"/>
    <property type="match status" value="1"/>
</dbReference>
<dbReference type="Pfam" id="PF04588">
    <property type="entry name" value="HIG_1_N"/>
    <property type="match status" value="1"/>
</dbReference>
<dbReference type="PROSITE" id="PS51503">
    <property type="entry name" value="HIG1"/>
    <property type="match status" value="1"/>
</dbReference>
<comment type="function">
    <text evidence="1">Cytochrome c oxidase subunit which plays a role in assembly of respiratory supercomplexes.</text>
</comment>
<comment type="subunit">
    <text evidence="1">Associates with the respiratory chain complex III/complex IV supercomplex.</text>
</comment>
<comment type="subcellular location">
    <subcellularLocation>
        <location evidence="3">Mitochondrion membrane</location>
        <topology evidence="3">Multi-pass membrane protein</topology>
    </subcellularLocation>
</comment>
<comment type="similarity">
    <text evidence="5">Belongs to the RCF1 family.</text>
</comment>
<reference key="1">
    <citation type="journal article" date="2003" name="Fungal Genet. Biol.">
        <title>Characterization of the genomic organization of the region bordering the centromere of chromosome V of Podospora anserina by direct sequencing.</title>
        <authorList>
            <person name="Silar P."/>
            <person name="Barreau C."/>
            <person name="Debuchy R."/>
            <person name="Kicka S."/>
            <person name="Turcq B."/>
            <person name="Sainsard-Chanet A."/>
            <person name="Sellem C.H."/>
            <person name="Billault A."/>
            <person name="Cattolico L."/>
            <person name="Duprat S."/>
            <person name="Weissenbach J."/>
        </authorList>
    </citation>
    <scope>NUCLEOTIDE SEQUENCE [LARGE SCALE GENOMIC DNA]</scope>
    <source>
        <strain>s</strain>
    </source>
</reference>
<reference key="2">
    <citation type="journal article" date="2008" name="Genome Biol.">
        <title>The genome sequence of the model ascomycete fungus Podospora anserina.</title>
        <authorList>
            <person name="Espagne E."/>
            <person name="Lespinet O."/>
            <person name="Malagnac F."/>
            <person name="Da Silva C."/>
            <person name="Jaillon O."/>
            <person name="Porcel B.M."/>
            <person name="Couloux A."/>
            <person name="Aury J.-M."/>
            <person name="Segurens B."/>
            <person name="Poulain J."/>
            <person name="Anthouard V."/>
            <person name="Grossetete S."/>
            <person name="Khalili H."/>
            <person name="Coppin E."/>
            <person name="Dequard-Chablat M."/>
            <person name="Picard M."/>
            <person name="Contamine V."/>
            <person name="Arnaise S."/>
            <person name="Bourdais A."/>
            <person name="Berteaux-Lecellier V."/>
            <person name="Gautheret D."/>
            <person name="de Vries R.P."/>
            <person name="Battaglia E."/>
            <person name="Coutinho P.M."/>
            <person name="Danchin E.G.J."/>
            <person name="Henrissat B."/>
            <person name="El Khoury R."/>
            <person name="Sainsard-Chanet A."/>
            <person name="Boivin A."/>
            <person name="Pinan-Lucarre B."/>
            <person name="Sellem C.H."/>
            <person name="Debuchy R."/>
            <person name="Wincker P."/>
            <person name="Weissenbach J."/>
            <person name="Silar P."/>
        </authorList>
    </citation>
    <scope>NUCLEOTIDE SEQUENCE [LARGE SCALE GENOMIC DNA]</scope>
    <source>
        <strain>S / ATCC MYA-4624 / DSM 980 / FGSC 10383</strain>
    </source>
</reference>
<reference key="3">
    <citation type="journal article" date="2014" name="Genetics">
        <title>Maintaining two mating types: Structure of the mating type locus and its role in heterokaryosis in Podospora anserina.</title>
        <authorList>
            <person name="Grognet P."/>
            <person name="Bidard F."/>
            <person name="Kuchly C."/>
            <person name="Tong L.C.H."/>
            <person name="Coppin E."/>
            <person name="Benkhali J.A."/>
            <person name="Couloux A."/>
            <person name="Wincker P."/>
            <person name="Debuchy R."/>
            <person name="Silar P."/>
        </authorList>
    </citation>
    <scope>GENOME REANNOTATION</scope>
    <source>
        <strain>S / ATCC MYA-4624 / DSM 980 / FGSC 10383</strain>
    </source>
</reference>
<evidence type="ECO:0000250" key="1"/>
<evidence type="ECO:0000255" key="2"/>
<evidence type="ECO:0000255" key="3">
    <source>
        <dbReference type="PROSITE-ProRule" id="PRU00836"/>
    </source>
</evidence>
<evidence type="ECO:0000256" key="4">
    <source>
        <dbReference type="SAM" id="MobiDB-lite"/>
    </source>
</evidence>
<evidence type="ECO:0000305" key="5"/>
<sequence length="218" mass="24135">MSNGPLSNRPLPSSFDSNDDFYNENGFQKVLRRLKEEPLVPIGCLLTVAAFTNAYRAMRRGDHAKVQKMFRARVAAQAFTVVAMVAGGMYYQADRHKQKELWKLRQQKDAEEKHQKWIRELEARDAEEKALQERLDKRRKRAAERAGGTGTESVAAQARAALRESKAGKTETGEATSTEANQADGGVLGSLGGWFGGSKKAPEDTTPALESKPEDPKN</sequence>
<accession>Q875C2</accession>
<accession>A0A090CSM9</accession>
<keyword id="KW-0175">Coiled coil</keyword>
<keyword id="KW-0472">Membrane</keyword>
<keyword id="KW-0496">Mitochondrion</keyword>
<keyword id="KW-1185">Reference proteome</keyword>
<keyword id="KW-0812">Transmembrane</keyword>
<keyword id="KW-1133">Transmembrane helix</keyword>
<protein>
    <recommendedName>
        <fullName>Respiratory supercomplex factor 1, mitochondrial</fullName>
    </recommendedName>
</protein>
<organism>
    <name type="scientific">Podospora anserina (strain S / ATCC MYA-4624 / DSM 980 / FGSC 10383)</name>
    <name type="common">Pleurage anserina</name>
    <dbReference type="NCBI Taxonomy" id="515849"/>
    <lineage>
        <taxon>Eukaryota</taxon>
        <taxon>Fungi</taxon>
        <taxon>Dikarya</taxon>
        <taxon>Ascomycota</taxon>
        <taxon>Pezizomycotina</taxon>
        <taxon>Sordariomycetes</taxon>
        <taxon>Sordariomycetidae</taxon>
        <taxon>Sordariales</taxon>
        <taxon>Podosporaceae</taxon>
        <taxon>Podospora</taxon>
        <taxon>Podospora anserina</taxon>
    </lineage>
</organism>
<name>RCF1_PODAN</name>
<feature type="chain" id="PRO_0000399652" description="Respiratory supercomplex factor 1, mitochondrial">
    <location>
        <begin position="1"/>
        <end position="218"/>
    </location>
</feature>
<feature type="transmembrane region" description="Helical" evidence="3">
    <location>
        <begin position="38"/>
        <end position="57"/>
    </location>
</feature>
<feature type="transmembrane region" description="Helical" evidence="3">
    <location>
        <begin position="69"/>
        <end position="91"/>
    </location>
</feature>
<feature type="domain" description="HIG1" evidence="3">
    <location>
        <begin position="11"/>
        <end position="102"/>
    </location>
</feature>
<feature type="region of interest" description="Disordered" evidence="4">
    <location>
        <begin position="132"/>
        <end position="218"/>
    </location>
</feature>
<feature type="coiled-coil region" evidence="2">
    <location>
        <begin position="103"/>
        <end position="137"/>
    </location>
</feature>
<feature type="compositionally biased region" description="Basic and acidic residues" evidence="4">
    <location>
        <begin position="161"/>
        <end position="172"/>
    </location>
</feature>
<feature type="compositionally biased region" description="Gly residues" evidence="4">
    <location>
        <begin position="186"/>
        <end position="196"/>
    </location>
</feature>
<gene>
    <name type="primary">RCF1</name>
    <name type="synonym">AIM31</name>
    <name type="ordered locus">Pa_5_5310</name>
    <name type="ORF">Pa5G0002</name>
    <name type="ORF">PODANS_5_5310</name>
</gene>
<proteinExistence type="inferred from homology"/>